<sequence length="795" mass="86437">MKFSESWLREWVKPAINSEELAHQITMAGLEVDEVAPVAGEFTGVKVGKVVECGQHPDADKLRVTKIDIGEEELLDIVCGASNCRLGLTVAVATVGAVLPGNFKIKKAKLRGVPSHGMLCSFSELGIDVESEGILELPEGTTLGADVRDILELNDVAIDVDLTANRADCFSIRGLAREVGVLNRADVTEPTIAAVATSIEDAVSIEVKATEACPRYLGRVIKNVNAKAETPIWMQEKLRRCGIRSIDAIVDITNYVMLEQGQPMHAFDLAKIDGGIVVRMAEQDEKLTLLDGNEAKLNDNTLVIADQNKALAIAGIFGGQESGVTSETTDIMLECAFFAPDHIRGRARAYGLHTDSSLRFERGVDSTLQAAAMERATQLLVELCGGEVAPVVAVESEADLPKANTVELRRSKLDGLLGHHIPSTDVVEILTRLGCAVESTDTGWTASSPSWRFDIAIEQDLIEEVGRIYGYNNIPNQAPVAALNMNDHKEANQPLKRVRDLLVDRGYHEAITYSFVEPEQQKLIVPEIEPLILPFPISAEMSAMRLSLWTGLINTVVHNQKRQQPRVRLFESGLRFIPEESAENGMRQEMMLAGIIAGTRGEEHWDIATNTVDFFDLKGDLEAVLELTANELAYEFKAAKHPALHPGQTAAIVVDGKEVGFIGTVHPELERKFGLNGRTIMFEIEWDAINTRVIPEAASVSKFPANRRDIAIVADEAIASGDIVAECLASGGELLTSAKLFDVYRGQGVEEGKKSLAIALTLQSVERTLEEADITSAVDAIVAAIGEKFSATLRD</sequence>
<name>SYFB_ALIF1</name>
<evidence type="ECO:0000255" key="1">
    <source>
        <dbReference type="HAMAP-Rule" id="MF_00283"/>
    </source>
</evidence>
<organism>
    <name type="scientific">Aliivibrio fischeri (strain ATCC 700601 / ES114)</name>
    <name type="common">Vibrio fischeri</name>
    <dbReference type="NCBI Taxonomy" id="312309"/>
    <lineage>
        <taxon>Bacteria</taxon>
        <taxon>Pseudomonadati</taxon>
        <taxon>Pseudomonadota</taxon>
        <taxon>Gammaproteobacteria</taxon>
        <taxon>Vibrionales</taxon>
        <taxon>Vibrionaceae</taxon>
        <taxon>Aliivibrio</taxon>
    </lineage>
</organism>
<dbReference type="EC" id="6.1.1.20" evidence="1"/>
<dbReference type="EMBL" id="CP000020">
    <property type="protein sequence ID" value="AAW85731.1"/>
    <property type="molecule type" value="Genomic_DNA"/>
</dbReference>
<dbReference type="RefSeq" id="WP_011261851.1">
    <property type="nucleotide sequence ID" value="NC_006840.2"/>
</dbReference>
<dbReference type="RefSeq" id="YP_204619.1">
    <property type="nucleotide sequence ID" value="NC_006840.2"/>
</dbReference>
<dbReference type="SMR" id="Q5E5G5"/>
<dbReference type="STRING" id="312309.VF_1236"/>
<dbReference type="EnsemblBacteria" id="AAW85731">
    <property type="protein sequence ID" value="AAW85731"/>
    <property type="gene ID" value="VF_1236"/>
</dbReference>
<dbReference type="GeneID" id="54163907"/>
<dbReference type="KEGG" id="vfi:VF_1236"/>
<dbReference type="PATRIC" id="fig|312309.11.peg.1243"/>
<dbReference type="eggNOG" id="COG0072">
    <property type="taxonomic scope" value="Bacteria"/>
</dbReference>
<dbReference type="eggNOG" id="COG0073">
    <property type="taxonomic scope" value="Bacteria"/>
</dbReference>
<dbReference type="HOGENOM" id="CLU_016891_0_0_6"/>
<dbReference type="OrthoDB" id="9805455at2"/>
<dbReference type="Proteomes" id="UP000000537">
    <property type="component" value="Chromosome I"/>
</dbReference>
<dbReference type="GO" id="GO:0009328">
    <property type="term" value="C:phenylalanine-tRNA ligase complex"/>
    <property type="evidence" value="ECO:0007669"/>
    <property type="project" value="TreeGrafter"/>
</dbReference>
<dbReference type="GO" id="GO:0005524">
    <property type="term" value="F:ATP binding"/>
    <property type="evidence" value="ECO:0007669"/>
    <property type="project" value="UniProtKB-UniRule"/>
</dbReference>
<dbReference type="GO" id="GO:0000287">
    <property type="term" value="F:magnesium ion binding"/>
    <property type="evidence" value="ECO:0007669"/>
    <property type="project" value="UniProtKB-UniRule"/>
</dbReference>
<dbReference type="GO" id="GO:0004826">
    <property type="term" value="F:phenylalanine-tRNA ligase activity"/>
    <property type="evidence" value="ECO:0007669"/>
    <property type="project" value="UniProtKB-UniRule"/>
</dbReference>
<dbReference type="GO" id="GO:0000049">
    <property type="term" value="F:tRNA binding"/>
    <property type="evidence" value="ECO:0007669"/>
    <property type="project" value="UniProtKB-KW"/>
</dbReference>
<dbReference type="GO" id="GO:0006432">
    <property type="term" value="P:phenylalanyl-tRNA aminoacylation"/>
    <property type="evidence" value="ECO:0007669"/>
    <property type="project" value="UniProtKB-UniRule"/>
</dbReference>
<dbReference type="CDD" id="cd00769">
    <property type="entry name" value="PheRS_beta_core"/>
    <property type="match status" value="1"/>
</dbReference>
<dbReference type="CDD" id="cd02796">
    <property type="entry name" value="tRNA_bind_bactPheRS"/>
    <property type="match status" value="1"/>
</dbReference>
<dbReference type="FunFam" id="2.40.50.140:FF:000045">
    <property type="entry name" value="Phenylalanine--tRNA ligase beta subunit"/>
    <property type="match status" value="1"/>
</dbReference>
<dbReference type="FunFam" id="3.30.56.10:FF:000002">
    <property type="entry name" value="Phenylalanine--tRNA ligase beta subunit"/>
    <property type="match status" value="1"/>
</dbReference>
<dbReference type="FunFam" id="3.30.70.380:FF:000001">
    <property type="entry name" value="Phenylalanine--tRNA ligase beta subunit"/>
    <property type="match status" value="1"/>
</dbReference>
<dbReference type="FunFam" id="3.30.930.10:FF:000022">
    <property type="entry name" value="Phenylalanine--tRNA ligase beta subunit"/>
    <property type="match status" value="1"/>
</dbReference>
<dbReference type="FunFam" id="3.50.40.10:FF:000001">
    <property type="entry name" value="Phenylalanine--tRNA ligase beta subunit"/>
    <property type="match status" value="1"/>
</dbReference>
<dbReference type="Gene3D" id="3.30.56.10">
    <property type="match status" value="2"/>
</dbReference>
<dbReference type="Gene3D" id="3.30.930.10">
    <property type="entry name" value="Bira Bifunctional Protein, Domain 2"/>
    <property type="match status" value="1"/>
</dbReference>
<dbReference type="Gene3D" id="3.30.70.380">
    <property type="entry name" value="Ferrodoxin-fold anticodon-binding domain"/>
    <property type="match status" value="1"/>
</dbReference>
<dbReference type="Gene3D" id="2.40.50.140">
    <property type="entry name" value="Nucleic acid-binding proteins"/>
    <property type="match status" value="1"/>
</dbReference>
<dbReference type="Gene3D" id="3.50.40.10">
    <property type="entry name" value="Phenylalanyl-trna Synthetase, Chain B, domain 3"/>
    <property type="match status" value="1"/>
</dbReference>
<dbReference type="HAMAP" id="MF_00283">
    <property type="entry name" value="Phe_tRNA_synth_beta1"/>
    <property type="match status" value="1"/>
</dbReference>
<dbReference type="InterPro" id="IPR045864">
    <property type="entry name" value="aa-tRNA-synth_II/BPL/LPL"/>
</dbReference>
<dbReference type="InterPro" id="IPR005146">
    <property type="entry name" value="B3/B4_tRNA-bd"/>
</dbReference>
<dbReference type="InterPro" id="IPR009061">
    <property type="entry name" value="DNA-bd_dom_put_sf"/>
</dbReference>
<dbReference type="InterPro" id="IPR005121">
    <property type="entry name" value="Fdx_antiC-bd"/>
</dbReference>
<dbReference type="InterPro" id="IPR036690">
    <property type="entry name" value="Fdx_antiC-bd_sf"/>
</dbReference>
<dbReference type="InterPro" id="IPR012340">
    <property type="entry name" value="NA-bd_OB-fold"/>
</dbReference>
<dbReference type="InterPro" id="IPR045060">
    <property type="entry name" value="Phe-tRNA-ligase_IIc_bsu"/>
</dbReference>
<dbReference type="InterPro" id="IPR004532">
    <property type="entry name" value="Phe-tRNA-ligase_IIc_bsu_bact"/>
</dbReference>
<dbReference type="InterPro" id="IPR020825">
    <property type="entry name" value="Phe-tRNA_synthase-like_B3/B4"/>
</dbReference>
<dbReference type="InterPro" id="IPR041616">
    <property type="entry name" value="PheRS_beta_core"/>
</dbReference>
<dbReference type="InterPro" id="IPR002547">
    <property type="entry name" value="tRNA-bd_dom"/>
</dbReference>
<dbReference type="InterPro" id="IPR033714">
    <property type="entry name" value="tRNA_bind_bactPheRS"/>
</dbReference>
<dbReference type="InterPro" id="IPR005147">
    <property type="entry name" value="tRNA_synthase_B5-dom"/>
</dbReference>
<dbReference type="NCBIfam" id="TIGR00472">
    <property type="entry name" value="pheT_bact"/>
    <property type="match status" value="1"/>
</dbReference>
<dbReference type="NCBIfam" id="NF045760">
    <property type="entry name" value="YtpR"/>
    <property type="match status" value="1"/>
</dbReference>
<dbReference type="PANTHER" id="PTHR10947:SF0">
    <property type="entry name" value="PHENYLALANINE--TRNA LIGASE BETA SUBUNIT"/>
    <property type="match status" value="1"/>
</dbReference>
<dbReference type="PANTHER" id="PTHR10947">
    <property type="entry name" value="PHENYLALANYL-TRNA SYNTHETASE BETA CHAIN AND LEUCINE-RICH REPEAT-CONTAINING PROTEIN 47"/>
    <property type="match status" value="1"/>
</dbReference>
<dbReference type="Pfam" id="PF03483">
    <property type="entry name" value="B3_4"/>
    <property type="match status" value="1"/>
</dbReference>
<dbReference type="Pfam" id="PF03484">
    <property type="entry name" value="B5"/>
    <property type="match status" value="1"/>
</dbReference>
<dbReference type="Pfam" id="PF03147">
    <property type="entry name" value="FDX-ACB"/>
    <property type="match status" value="1"/>
</dbReference>
<dbReference type="Pfam" id="PF01588">
    <property type="entry name" value="tRNA_bind"/>
    <property type="match status" value="1"/>
</dbReference>
<dbReference type="Pfam" id="PF17759">
    <property type="entry name" value="tRNA_synthFbeta"/>
    <property type="match status" value="1"/>
</dbReference>
<dbReference type="SMART" id="SM00873">
    <property type="entry name" value="B3_4"/>
    <property type="match status" value="1"/>
</dbReference>
<dbReference type="SMART" id="SM00874">
    <property type="entry name" value="B5"/>
    <property type="match status" value="1"/>
</dbReference>
<dbReference type="SMART" id="SM00896">
    <property type="entry name" value="FDX-ACB"/>
    <property type="match status" value="1"/>
</dbReference>
<dbReference type="SUPFAM" id="SSF54991">
    <property type="entry name" value="Anticodon-binding domain of PheRS"/>
    <property type="match status" value="1"/>
</dbReference>
<dbReference type="SUPFAM" id="SSF55681">
    <property type="entry name" value="Class II aaRS and biotin synthetases"/>
    <property type="match status" value="1"/>
</dbReference>
<dbReference type="SUPFAM" id="SSF50249">
    <property type="entry name" value="Nucleic acid-binding proteins"/>
    <property type="match status" value="1"/>
</dbReference>
<dbReference type="SUPFAM" id="SSF56037">
    <property type="entry name" value="PheT/TilS domain"/>
    <property type="match status" value="1"/>
</dbReference>
<dbReference type="SUPFAM" id="SSF46955">
    <property type="entry name" value="Putative DNA-binding domain"/>
    <property type="match status" value="1"/>
</dbReference>
<dbReference type="PROSITE" id="PS51483">
    <property type="entry name" value="B5"/>
    <property type="match status" value="1"/>
</dbReference>
<dbReference type="PROSITE" id="PS51447">
    <property type="entry name" value="FDX_ACB"/>
    <property type="match status" value="1"/>
</dbReference>
<dbReference type="PROSITE" id="PS50886">
    <property type="entry name" value="TRBD"/>
    <property type="match status" value="1"/>
</dbReference>
<keyword id="KW-0030">Aminoacyl-tRNA synthetase</keyword>
<keyword id="KW-0067">ATP-binding</keyword>
<keyword id="KW-0963">Cytoplasm</keyword>
<keyword id="KW-0436">Ligase</keyword>
<keyword id="KW-0460">Magnesium</keyword>
<keyword id="KW-0479">Metal-binding</keyword>
<keyword id="KW-0547">Nucleotide-binding</keyword>
<keyword id="KW-0648">Protein biosynthesis</keyword>
<keyword id="KW-1185">Reference proteome</keyword>
<keyword id="KW-0694">RNA-binding</keyword>
<keyword id="KW-0820">tRNA-binding</keyword>
<protein>
    <recommendedName>
        <fullName evidence="1">Phenylalanine--tRNA ligase beta subunit</fullName>
        <ecNumber evidence="1">6.1.1.20</ecNumber>
    </recommendedName>
    <alternativeName>
        <fullName evidence="1">Phenylalanyl-tRNA synthetase beta subunit</fullName>
        <shortName evidence="1">PheRS</shortName>
    </alternativeName>
</protein>
<proteinExistence type="inferred from homology"/>
<gene>
    <name evidence="1" type="primary">pheT</name>
    <name type="ordered locus">VF_1236</name>
</gene>
<comment type="catalytic activity">
    <reaction evidence="1">
        <text>tRNA(Phe) + L-phenylalanine + ATP = L-phenylalanyl-tRNA(Phe) + AMP + diphosphate + H(+)</text>
        <dbReference type="Rhea" id="RHEA:19413"/>
        <dbReference type="Rhea" id="RHEA-COMP:9668"/>
        <dbReference type="Rhea" id="RHEA-COMP:9699"/>
        <dbReference type="ChEBI" id="CHEBI:15378"/>
        <dbReference type="ChEBI" id="CHEBI:30616"/>
        <dbReference type="ChEBI" id="CHEBI:33019"/>
        <dbReference type="ChEBI" id="CHEBI:58095"/>
        <dbReference type="ChEBI" id="CHEBI:78442"/>
        <dbReference type="ChEBI" id="CHEBI:78531"/>
        <dbReference type="ChEBI" id="CHEBI:456215"/>
        <dbReference type="EC" id="6.1.1.20"/>
    </reaction>
</comment>
<comment type="cofactor">
    <cofactor evidence="1">
        <name>Mg(2+)</name>
        <dbReference type="ChEBI" id="CHEBI:18420"/>
    </cofactor>
    <text evidence="1">Binds 2 magnesium ions per tetramer.</text>
</comment>
<comment type="subunit">
    <text evidence="1">Tetramer of two alpha and two beta subunits.</text>
</comment>
<comment type="subcellular location">
    <subcellularLocation>
        <location evidence="1">Cytoplasm</location>
    </subcellularLocation>
</comment>
<comment type="similarity">
    <text evidence="1">Belongs to the phenylalanyl-tRNA synthetase beta subunit family. Type 1 subfamily.</text>
</comment>
<accession>Q5E5G5</accession>
<reference key="1">
    <citation type="journal article" date="2005" name="Proc. Natl. Acad. Sci. U.S.A.">
        <title>Complete genome sequence of Vibrio fischeri: a symbiotic bacterium with pathogenic congeners.</title>
        <authorList>
            <person name="Ruby E.G."/>
            <person name="Urbanowski M."/>
            <person name="Campbell J."/>
            <person name="Dunn A."/>
            <person name="Faini M."/>
            <person name="Gunsalus R."/>
            <person name="Lostroh P."/>
            <person name="Lupp C."/>
            <person name="McCann J."/>
            <person name="Millikan D."/>
            <person name="Schaefer A."/>
            <person name="Stabb E."/>
            <person name="Stevens A."/>
            <person name="Visick K."/>
            <person name="Whistler C."/>
            <person name="Greenberg E.P."/>
        </authorList>
    </citation>
    <scope>NUCLEOTIDE SEQUENCE [LARGE SCALE GENOMIC DNA]</scope>
    <source>
        <strain>ATCC 700601 / ES114</strain>
    </source>
</reference>
<feature type="chain" id="PRO_0000126982" description="Phenylalanine--tRNA ligase beta subunit">
    <location>
        <begin position="1"/>
        <end position="795"/>
    </location>
</feature>
<feature type="domain" description="tRNA-binding" evidence="1">
    <location>
        <begin position="39"/>
        <end position="148"/>
    </location>
</feature>
<feature type="domain" description="B5" evidence="1">
    <location>
        <begin position="401"/>
        <end position="476"/>
    </location>
</feature>
<feature type="domain" description="FDX-ACB" evidence="1">
    <location>
        <begin position="701"/>
        <end position="794"/>
    </location>
</feature>
<feature type="binding site" evidence="1">
    <location>
        <position position="454"/>
    </location>
    <ligand>
        <name>Mg(2+)</name>
        <dbReference type="ChEBI" id="CHEBI:18420"/>
        <note>shared with alpha subunit</note>
    </ligand>
</feature>
<feature type="binding site" evidence="1">
    <location>
        <position position="460"/>
    </location>
    <ligand>
        <name>Mg(2+)</name>
        <dbReference type="ChEBI" id="CHEBI:18420"/>
        <note>shared with alpha subunit</note>
    </ligand>
</feature>
<feature type="binding site" evidence="1">
    <location>
        <position position="463"/>
    </location>
    <ligand>
        <name>Mg(2+)</name>
        <dbReference type="ChEBI" id="CHEBI:18420"/>
        <note>shared with alpha subunit</note>
    </ligand>
</feature>
<feature type="binding site" evidence="1">
    <location>
        <position position="464"/>
    </location>
    <ligand>
        <name>Mg(2+)</name>
        <dbReference type="ChEBI" id="CHEBI:18420"/>
        <note>shared with alpha subunit</note>
    </ligand>
</feature>